<name>METK_ALBFT</name>
<sequence length="393" mass="42809">MANDFLFTSESVSEGHPDKVADQISDAILDAIFKQDPKSRVAAETLCNTGLVVLAGEITTNAHVDYIQVARDTLKRIGYDNTEYGIDYKGCAVLVAYDKQSNDIAQGVDHASDDHLNTGAGDQGLMFGYACNETPELMPAPIYYAHRLVERQAQLRKDGRLPFLRPDAKSQITMHYVDGKPHSIDTVVLSSQHSPEMSNGLTMKPAFIEAVMEDIIKPVCPKEWLTADTKYLINPTGRFVVGGPQGDCGLTGRKIIVDTYGGACPHGGGAFSGKDPSKVDRSAAYAARYVAKNIVAAGLARQCQIQVAYAIGVAKPMNVTVYTEGTGVIPDDKIAELVHELFDLRPKGIIQMLDLLRPIYEKTAAYGHFGREEPEFTWERTDKAQALRAAAGL</sequence>
<dbReference type="EC" id="2.5.1.6" evidence="1"/>
<dbReference type="EMBL" id="CP000267">
    <property type="protein sequence ID" value="ABD71579.1"/>
    <property type="molecule type" value="Genomic_DNA"/>
</dbReference>
<dbReference type="RefSeq" id="WP_011466142.1">
    <property type="nucleotide sequence ID" value="NC_007908.1"/>
</dbReference>
<dbReference type="SMR" id="Q21RM4"/>
<dbReference type="STRING" id="338969.Rfer_3880"/>
<dbReference type="KEGG" id="rfr:Rfer_3880"/>
<dbReference type="eggNOG" id="COG0192">
    <property type="taxonomic scope" value="Bacteria"/>
</dbReference>
<dbReference type="HOGENOM" id="CLU_041802_1_1_4"/>
<dbReference type="OrthoDB" id="9801686at2"/>
<dbReference type="UniPathway" id="UPA00315">
    <property type="reaction ID" value="UER00080"/>
</dbReference>
<dbReference type="Proteomes" id="UP000008332">
    <property type="component" value="Chromosome"/>
</dbReference>
<dbReference type="GO" id="GO:0005737">
    <property type="term" value="C:cytoplasm"/>
    <property type="evidence" value="ECO:0007669"/>
    <property type="project" value="UniProtKB-SubCell"/>
</dbReference>
<dbReference type="GO" id="GO:0005524">
    <property type="term" value="F:ATP binding"/>
    <property type="evidence" value="ECO:0007669"/>
    <property type="project" value="UniProtKB-UniRule"/>
</dbReference>
<dbReference type="GO" id="GO:0000287">
    <property type="term" value="F:magnesium ion binding"/>
    <property type="evidence" value="ECO:0007669"/>
    <property type="project" value="UniProtKB-UniRule"/>
</dbReference>
<dbReference type="GO" id="GO:0004478">
    <property type="term" value="F:methionine adenosyltransferase activity"/>
    <property type="evidence" value="ECO:0007669"/>
    <property type="project" value="UniProtKB-UniRule"/>
</dbReference>
<dbReference type="GO" id="GO:0006730">
    <property type="term" value="P:one-carbon metabolic process"/>
    <property type="evidence" value="ECO:0007669"/>
    <property type="project" value="UniProtKB-KW"/>
</dbReference>
<dbReference type="GO" id="GO:0006556">
    <property type="term" value="P:S-adenosylmethionine biosynthetic process"/>
    <property type="evidence" value="ECO:0007669"/>
    <property type="project" value="UniProtKB-UniRule"/>
</dbReference>
<dbReference type="CDD" id="cd18079">
    <property type="entry name" value="S-AdoMet_synt"/>
    <property type="match status" value="1"/>
</dbReference>
<dbReference type="FunFam" id="3.30.300.10:FF:000003">
    <property type="entry name" value="S-adenosylmethionine synthase"/>
    <property type="match status" value="1"/>
</dbReference>
<dbReference type="FunFam" id="3.30.300.10:FF:000004">
    <property type="entry name" value="S-adenosylmethionine synthase"/>
    <property type="match status" value="1"/>
</dbReference>
<dbReference type="Gene3D" id="3.30.300.10">
    <property type="match status" value="3"/>
</dbReference>
<dbReference type="HAMAP" id="MF_00086">
    <property type="entry name" value="S_AdoMet_synth1"/>
    <property type="match status" value="1"/>
</dbReference>
<dbReference type="InterPro" id="IPR022631">
    <property type="entry name" value="ADOMET_SYNTHASE_CS"/>
</dbReference>
<dbReference type="InterPro" id="IPR022630">
    <property type="entry name" value="S-AdoMet_synt_C"/>
</dbReference>
<dbReference type="InterPro" id="IPR022629">
    <property type="entry name" value="S-AdoMet_synt_central"/>
</dbReference>
<dbReference type="InterPro" id="IPR022628">
    <property type="entry name" value="S-AdoMet_synt_N"/>
</dbReference>
<dbReference type="InterPro" id="IPR002133">
    <property type="entry name" value="S-AdoMet_synthetase"/>
</dbReference>
<dbReference type="InterPro" id="IPR022636">
    <property type="entry name" value="S-AdoMet_synthetase_sfam"/>
</dbReference>
<dbReference type="NCBIfam" id="TIGR01034">
    <property type="entry name" value="metK"/>
    <property type="match status" value="1"/>
</dbReference>
<dbReference type="PANTHER" id="PTHR11964">
    <property type="entry name" value="S-ADENOSYLMETHIONINE SYNTHETASE"/>
    <property type="match status" value="1"/>
</dbReference>
<dbReference type="Pfam" id="PF02773">
    <property type="entry name" value="S-AdoMet_synt_C"/>
    <property type="match status" value="1"/>
</dbReference>
<dbReference type="Pfam" id="PF02772">
    <property type="entry name" value="S-AdoMet_synt_M"/>
    <property type="match status" value="1"/>
</dbReference>
<dbReference type="Pfam" id="PF00438">
    <property type="entry name" value="S-AdoMet_synt_N"/>
    <property type="match status" value="1"/>
</dbReference>
<dbReference type="PIRSF" id="PIRSF000497">
    <property type="entry name" value="MAT"/>
    <property type="match status" value="1"/>
</dbReference>
<dbReference type="SUPFAM" id="SSF55973">
    <property type="entry name" value="S-adenosylmethionine synthetase"/>
    <property type="match status" value="3"/>
</dbReference>
<dbReference type="PROSITE" id="PS00376">
    <property type="entry name" value="ADOMET_SYNTHASE_1"/>
    <property type="match status" value="1"/>
</dbReference>
<dbReference type="PROSITE" id="PS00377">
    <property type="entry name" value="ADOMET_SYNTHASE_2"/>
    <property type="match status" value="1"/>
</dbReference>
<accession>Q21RM4</accession>
<gene>
    <name evidence="1" type="primary">metK</name>
    <name type="ordered locus">Rfer_3880</name>
</gene>
<feature type="chain" id="PRO_0000241026" description="S-adenosylmethionine synthase">
    <location>
        <begin position="1"/>
        <end position="393"/>
    </location>
</feature>
<feature type="region of interest" description="Flexible loop" evidence="1">
    <location>
        <begin position="100"/>
        <end position="110"/>
    </location>
</feature>
<feature type="binding site" description="in other chain" evidence="1">
    <location>
        <position position="16"/>
    </location>
    <ligand>
        <name>ATP</name>
        <dbReference type="ChEBI" id="CHEBI:30616"/>
        <note>ligand shared between two neighboring subunits</note>
    </ligand>
</feature>
<feature type="binding site" evidence="1">
    <location>
        <position position="18"/>
    </location>
    <ligand>
        <name>Mg(2+)</name>
        <dbReference type="ChEBI" id="CHEBI:18420"/>
    </ligand>
</feature>
<feature type="binding site" evidence="1">
    <location>
        <position position="44"/>
    </location>
    <ligand>
        <name>K(+)</name>
        <dbReference type="ChEBI" id="CHEBI:29103"/>
    </ligand>
</feature>
<feature type="binding site" description="in other chain" evidence="1">
    <location>
        <position position="57"/>
    </location>
    <ligand>
        <name>L-methionine</name>
        <dbReference type="ChEBI" id="CHEBI:57844"/>
        <note>ligand shared between two neighboring subunits</note>
    </ligand>
</feature>
<feature type="binding site" description="in other chain" evidence="1">
    <location>
        <position position="100"/>
    </location>
    <ligand>
        <name>L-methionine</name>
        <dbReference type="ChEBI" id="CHEBI:57844"/>
        <note>ligand shared between two neighboring subunits</note>
    </ligand>
</feature>
<feature type="binding site" description="in other chain" evidence="1">
    <location>
        <begin position="167"/>
        <end position="169"/>
    </location>
    <ligand>
        <name>ATP</name>
        <dbReference type="ChEBI" id="CHEBI:30616"/>
        <note>ligand shared between two neighboring subunits</note>
    </ligand>
</feature>
<feature type="binding site" description="in other chain" evidence="1">
    <location>
        <begin position="238"/>
        <end position="239"/>
    </location>
    <ligand>
        <name>ATP</name>
        <dbReference type="ChEBI" id="CHEBI:30616"/>
        <note>ligand shared between two neighboring subunits</note>
    </ligand>
</feature>
<feature type="binding site" evidence="1">
    <location>
        <position position="247"/>
    </location>
    <ligand>
        <name>ATP</name>
        <dbReference type="ChEBI" id="CHEBI:30616"/>
        <note>ligand shared between two neighboring subunits</note>
    </ligand>
</feature>
<feature type="binding site" evidence="1">
    <location>
        <position position="247"/>
    </location>
    <ligand>
        <name>L-methionine</name>
        <dbReference type="ChEBI" id="CHEBI:57844"/>
        <note>ligand shared between two neighboring subunits</note>
    </ligand>
</feature>
<feature type="binding site" description="in other chain" evidence="1">
    <location>
        <begin position="253"/>
        <end position="254"/>
    </location>
    <ligand>
        <name>ATP</name>
        <dbReference type="ChEBI" id="CHEBI:30616"/>
        <note>ligand shared between two neighboring subunits</note>
    </ligand>
</feature>
<feature type="binding site" evidence="1">
    <location>
        <position position="270"/>
    </location>
    <ligand>
        <name>ATP</name>
        <dbReference type="ChEBI" id="CHEBI:30616"/>
        <note>ligand shared between two neighboring subunits</note>
    </ligand>
</feature>
<feature type="binding site" evidence="1">
    <location>
        <position position="274"/>
    </location>
    <ligand>
        <name>ATP</name>
        <dbReference type="ChEBI" id="CHEBI:30616"/>
        <note>ligand shared between two neighboring subunits</note>
    </ligand>
</feature>
<feature type="binding site" description="in other chain" evidence="1">
    <location>
        <position position="278"/>
    </location>
    <ligand>
        <name>L-methionine</name>
        <dbReference type="ChEBI" id="CHEBI:57844"/>
        <note>ligand shared between two neighboring subunits</note>
    </ligand>
</feature>
<keyword id="KW-0067">ATP-binding</keyword>
<keyword id="KW-0963">Cytoplasm</keyword>
<keyword id="KW-0460">Magnesium</keyword>
<keyword id="KW-0479">Metal-binding</keyword>
<keyword id="KW-0547">Nucleotide-binding</keyword>
<keyword id="KW-0554">One-carbon metabolism</keyword>
<keyword id="KW-0630">Potassium</keyword>
<keyword id="KW-1185">Reference proteome</keyword>
<keyword id="KW-0808">Transferase</keyword>
<protein>
    <recommendedName>
        <fullName evidence="1">S-adenosylmethionine synthase</fullName>
        <shortName evidence="1">AdoMet synthase</shortName>
        <ecNumber evidence="1">2.5.1.6</ecNumber>
    </recommendedName>
    <alternativeName>
        <fullName evidence="1">MAT</fullName>
    </alternativeName>
    <alternativeName>
        <fullName evidence="1">Methionine adenosyltransferase</fullName>
    </alternativeName>
</protein>
<organism>
    <name type="scientific">Albidiferax ferrireducens (strain ATCC BAA-621 / DSM 15236 / T118)</name>
    <name type="common">Rhodoferax ferrireducens</name>
    <dbReference type="NCBI Taxonomy" id="338969"/>
    <lineage>
        <taxon>Bacteria</taxon>
        <taxon>Pseudomonadati</taxon>
        <taxon>Pseudomonadota</taxon>
        <taxon>Betaproteobacteria</taxon>
        <taxon>Burkholderiales</taxon>
        <taxon>Comamonadaceae</taxon>
        <taxon>Rhodoferax</taxon>
    </lineage>
</organism>
<proteinExistence type="inferred from homology"/>
<reference key="1">
    <citation type="submission" date="2006-02" db="EMBL/GenBank/DDBJ databases">
        <title>Complete sequence of chromosome of Rhodoferax ferrireducens DSM 15236.</title>
        <authorList>
            <person name="Copeland A."/>
            <person name="Lucas S."/>
            <person name="Lapidus A."/>
            <person name="Barry K."/>
            <person name="Detter J.C."/>
            <person name="Glavina del Rio T."/>
            <person name="Hammon N."/>
            <person name="Israni S."/>
            <person name="Pitluck S."/>
            <person name="Brettin T."/>
            <person name="Bruce D."/>
            <person name="Han C."/>
            <person name="Tapia R."/>
            <person name="Gilna P."/>
            <person name="Kiss H."/>
            <person name="Schmutz J."/>
            <person name="Larimer F."/>
            <person name="Land M."/>
            <person name="Kyrpides N."/>
            <person name="Ivanova N."/>
            <person name="Richardson P."/>
        </authorList>
    </citation>
    <scope>NUCLEOTIDE SEQUENCE [LARGE SCALE GENOMIC DNA]</scope>
    <source>
        <strain>ATCC BAA-621 / DSM 15236 / T118</strain>
    </source>
</reference>
<evidence type="ECO:0000255" key="1">
    <source>
        <dbReference type="HAMAP-Rule" id="MF_00086"/>
    </source>
</evidence>
<comment type="function">
    <text evidence="1">Catalyzes the formation of S-adenosylmethionine (AdoMet) from methionine and ATP. The overall synthetic reaction is composed of two sequential steps, AdoMet formation and the subsequent tripolyphosphate hydrolysis which occurs prior to release of AdoMet from the enzyme.</text>
</comment>
<comment type="catalytic activity">
    <reaction evidence="1">
        <text>L-methionine + ATP + H2O = S-adenosyl-L-methionine + phosphate + diphosphate</text>
        <dbReference type="Rhea" id="RHEA:21080"/>
        <dbReference type="ChEBI" id="CHEBI:15377"/>
        <dbReference type="ChEBI" id="CHEBI:30616"/>
        <dbReference type="ChEBI" id="CHEBI:33019"/>
        <dbReference type="ChEBI" id="CHEBI:43474"/>
        <dbReference type="ChEBI" id="CHEBI:57844"/>
        <dbReference type="ChEBI" id="CHEBI:59789"/>
        <dbReference type="EC" id="2.5.1.6"/>
    </reaction>
</comment>
<comment type="cofactor">
    <cofactor evidence="1">
        <name>Mg(2+)</name>
        <dbReference type="ChEBI" id="CHEBI:18420"/>
    </cofactor>
    <text evidence="1">Binds 2 divalent ions per subunit.</text>
</comment>
<comment type="cofactor">
    <cofactor evidence="1">
        <name>K(+)</name>
        <dbReference type="ChEBI" id="CHEBI:29103"/>
    </cofactor>
    <text evidence="1">Binds 1 potassium ion per subunit.</text>
</comment>
<comment type="pathway">
    <text evidence="1">Amino-acid biosynthesis; S-adenosyl-L-methionine biosynthesis; S-adenosyl-L-methionine from L-methionine: step 1/1.</text>
</comment>
<comment type="subunit">
    <text evidence="1">Homotetramer; dimer of dimers.</text>
</comment>
<comment type="subcellular location">
    <subcellularLocation>
        <location evidence="1">Cytoplasm</location>
    </subcellularLocation>
</comment>
<comment type="similarity">
    <text evidence="1">Belongs to the AdoMet synthase family.</text>
</comment>